<comment type="function">
    <text evidence="1">Catalyzes the reversible phosphorylation of UMP to UDP.</text>
</comment>
<comment type="catalytic activity">
    <reaction evidence="1">
        <text>UMP + ATP = UDP + ADP</text>
        <dbReference type="Rhea" id="RHEA:24400"/>
        <dbReference type="ChEBI" id="CHEBI:30616"/>
        <dbReference type="ChEBI" id="CHEBI:57865"/>
        <dbReference type="ChEBI" id="CHEBI:58223"/>
        <dbReference type="ChEBI" id="CHEBI:456216"/>
        <dbReference type="EC" id="2.7.4.22"/>
    </reaction>
</comment>
<comment type="activity regulation">
    <text evidence="1">Inhibited by UTP.</text>
</comment>
<comment type="pathway">
    <text evidence="1">Pyrimidine metabolism; CTP biosynthesis via de novo pathway; UDP from UMP (UMPK route): step 1/1.</text>
</comment>
<comment type="subunit">
    <text evidence="1">Homohexamer.</text>
</comment>
<comment type="subcellular location">
    <subcellularLocation>
        <location evidence="1">Cytoplasm</location>
    </subcellularLocation>
</comment>
<comment type="similarity">
    <text evidence="1">Belongs to the UMP kinase family.</text>
</comment>
<name>PYRH_ECTM1</name>
<dbReference type="EC" id="2.7.4.22" evidence="1"/>
<dbReference type="EMBL" id="CP000680">
    <property type="protein sequence ID" value="ABP85805.1"/>
    <property type="molecule type" value="Genomic_DNA"/>
</dbReference>
<dbReference type="SMR" id="A4XWT9"/>
<dbReference type="STRING" id="399739.Pmen_3051"/>
<dbReference type="KEGG" id="pmy:Pmen_3051"/>
<dbReference type="PATRIC" id="fig|399739.8.peg.3097"/>
<dbReference type="eggNOG" id="COG0528">
    <property type="taxonomic scope" value="Bacteria"/>
</dbReference>
<dbReference type="HOGENOM" id="CLU_033861_0_0_6"/>
<dbReference type="OrthoDB" id="9807458at2"/>
<dbReference type="UniPathway" id="UPA00159">
    <property type="reaction ID" value="UER00275"/>
</dbReference>
<dbReference type="GO" id="GO:0005829">
    <property type="term" value="C:cytosol"/>
    <property type="evidence" value="ECO:0007669"/>
    <property type="project" value="TreeGrafter"/>
</dbReference>
<dbReference type="GO" id="GO:0005524">
    <property type="term" value="F:ATP binding"/>
    <property type="evidence" value="ECO:0007669"/>
    <property type="project" value="UniProtKB-KW"/>
</dbReference>
<dbReference type="GO" id="GO:0033862">
    <property type="term" value="F:UMP kinase activity"/>
    <property type="evidence" value="ECO:0007669"/>
    <property type="project" value="UniProtKB-EC"/>
</dbReference>
<dbReference type="GO" id="GO:0044210">
    <property type="term" value="P:'de novo' CTP biosynthetic process"/>
    <property type="evidence" value="ECO:0007669"/>
    <property type="project" value="UniProtKB-UniRule"/>
</dbReference>
<dbReference type="GO" id="GO:0006225">
    <property type="term" value="P:UDP biosynthetic process"/>
    <property type="evidence" value="ECO:0007669"/>
    <property type="project" value="TreeGrafter"/>
</dbReference>
<dbReference type="CDD" id="cd04254">
    <property type="entry name" value="AAK_UMPK-PyrH-Ec"/>
    <property type="match status" value="1"/>
</dbReference>
<dbReference type="FunFam" id="3.40.1160.10:FF:000001">
    <property type="entry name" value="Uridylate kinase"/>
    <property type="match status" value="1"/>
</dbReference>
<dbReference type="Gene3D" id="3.40.1160.10">
    <property type="entry name" value="Acetylglutamate kinase-like"/>
    <property type="match status" value="1"/>
</dbReference>
<dbReference type="HAMAP" id="MF_01220_B">
    <property type="entry name" value="PyrH_B"/>
    <property type="match status" value="1"/>
</dbReference>
<dbReference type="InterPro" id="IPR036393">
    <property type="entry name" value="AceGlu_kinase-like_sf"/>
</dbReference>
<dbReference type="InterPro" id="IPR001048">
    <property type="entry name" value="Asp/Glu/Uridylate_kinase"/>
</dbReference>
<dbReference type="InterPro" id="IPR011817">
    <property type="entry name" value="Uridylate_kinase"/>
</dbReference>
<dbReference type="InterPro" id="IPR015963">
    <property type="entry name" value="Uridylate_kinase_bac"/>
</dbReference>
<dbReference type="NCBIfam" id="TIGR02075">
    <property type="entry name" value="pyrH_bact"/>
    <property type="match status" value="1"/>
</dbReference>
<dbReference type="PANTHER" id="PTHR42833">
    <property type="entry name" value="URIDYLATE KINASE"/>
    <property type="match status" value="1"/>
</dbReference>
<dbReference type="PANTHER" id="PTHR42833:SF4">
    <property type="entry name" value="URIDYLATE KINASE PUMPKIN, CHLOROPLASTIC"/>
    <property type="match status" value="1"/>
</dbReference>
<dbReference type="Pfam" id="PF00696">
    <property type="entry name" value="AA_kinase"/>
    <property type="match status" value="1"/>
</dbReference>
<dbReference type="PIRSF" id="PIRSF005650">
    <property type="entry name" value="Uridylate_kin"/>
    <property type="match status" value="1"/>
</dbReference>
<dbReference type="SUPFAM" id="SSF53633">
    <property type="entry name" value="Carbamate kinase-like"/>
    <property type="match status" value="1"/>
</dbReference>
<reference key="1">
    <citation type="submission" date="2007-04" db="EMBL/GenBank/DDBJ databases">
        <title>Complete sequence of Pseudomonas mendocina ymp.</title>
        <authorList>
            <consortium name="US DOE Joint Genome Institute"/>
            <person name="Copeland A."/>
            <person name="Lucas S."/>
            <person name="Lapidus A."/>
            <person name="Barry K."/>
            <person name="Glavina del Rio T."/>
            <person name="Dalin E."/>
            <person name="Tice H."/>
            <person name="Pitluck S."/>
            <person name="Kiss H."/>
            <person name="Brettin T."/>
            <person name="Detter J.C."/>
            <person name="Bruce D."/>
            <person name="Han C."/>
            <person name="Schmutz J."/>
            <person name="Larimer F."/>
            <person name="Land M."/>
            <person name="Hauser L."/>
            <person name="Kyrpides N."/>
            <person name="Mikhailova N."/>
            <person name="Hersman L."/>
            <person name="Dubois J."/>
            <person name="Maurice P."/>
            <person name="Richardson P."/>
        </authorList>
    </citation>
    <scope>NUCLEOTIDE SEQUENCE [LARGE SCALE GENOMIC DNA]</scope>
    <source>
        <strain>ymp</strain>
    </source>
</reference>
<sequence>MAQQTSGRQPRYKRILLKLSGEALMGSEDFGIDPKVLDRMALEVGQLVGIGVQVGLVIGGGNLFRGAALSAAGMDRVTGDHMGMLATVMNALAMRDALERSNIPAIVMSAISMVGVTDHYDRRKAMRHLKTGEVVIFAAGTGNPFFTTDSAACLRAIEIDADVVLKATKVDGVYTADPFKDPHAEKFERLTYDEVLDRKLGVMDLTAICLCRDHNMPLRVFNMNKPGALLNVVVGGAEGTLIEEDAQ</sequence>
<organism>
    <name type="scientific">Ectopseudomonas mendocina (strain ymp)</name>
    <name type="common">Pseudomonas mendocina</name>
    <dbReference type="NCBI Taxonomy" id="399739"/>
    <lineage>
        <taxon>Bacteria</taxon>
        <taxon>Pseudomonadati</taxon>
        <taxon>Pseudomonadota</taxon>
        <taxon>Gammaproteobacteria</taxon>
        <taxon>Pseudomonadales</taxon>
        <taxon>Pseudomonadaceae</taxon>
        <taxon>Ectopseudomonas</taxon>
    </lineage>
</organism>
<accession>A4XWT9</accession>
<protein>
    <recommendedName>
        <fullName evidence="1">Uridylate kinase</fullName>
        <shortName evidence="1">UK</shortName>
        <ecNumber evidence="1">2.7.4.22</ecNumber>
    </recommendedName>
    <alternativeName>
        <fullName evidence="1">Uridine monophosphate kinase</fullName>
        <shortName evidence="1">UMP kinase</shortName>
        <shortName evidence="1">UMPK</shortName>
    </alternativeName>
</protein>
<gene>
    <name evidence="1" type="primary">pyrH</name>
    <name type="ordered locus">Pmen_3051</name>
</gene>
<keyword id="KW-0067">ATP-binding</keyword>
<keyword id="KW-0963">Cytoplasm</keyword>
<keyword id="KW-0418">Kinase</keyword>
<keyword id="KW-0547">Nucleotide-binding</keyword>
<keyword id="KW-0665">Pyrimidine biosynthesis</keyword>
<keyword id="KW-0808">Transferase</keyword>
<evidence type="ECO:0000255" key="1">
    <source>
        <dbReference type="HAMAP-Rule" id="MF_01220"/>
    </source>
</evidence>
<feature type="chain" id="PRO_1000053985" description="Uridylate kinase">
    <location>
        <begin position="1"/>
        <end position="247"/>
    </location>
</feature>
<feature type="binding site" evidence="1">
    <location>
        <begin position="18"/>
        <end position="21"/>
    </location>
    <ligand>
        <name>ATP</name>
        <dbReference type="ChEBI" id="CHEBI:30616"/>
    </ligand>
</feature>
<feature type="binding site" evidence="1">
    <location>
        <position position="60"/>
    </location>
    <ligand>
        <name>UMP</name>
        <dbReference type="ChEBI" id="CHEBI:57865"/>
    </ligand>
</feature>
<feature type="binding site" evidence="1">
    <location>
        <position position="61"/>
    </location>
    <ligand>
        <name>ATP</name>
        <dbReference type="ChEBI" id="CHEBI:30616"/>
    </ligand>
</feature>
<feature type="binding site" evidence="1">
    <location>
        <position position="65"/>
    </location>
    <ligand>
        <name>ATP</name>
        <dbReference type="ChEBI" id="CHEBI:30616"/>
    </ligand>
</feature>
<feature type="binding site" evidence="1">
    <location>
        <position position="80"/>
    </location>
    <ligand>
        <name>UMP</name>
        <dbReference type="ChEBI" id="CHEBI:57865"/>
    </ligand>
</feature>
<feature type="binding site" evidence="1">
    <location>
        <begin position="141"/>
        <end position="148"/>
    </location>
    <ligand>
        <name>UMP</name>
        <dbReference type="ChEBI" id="CHEBI:57865"/>
    </ligand>
</feature>
<feature type="binding site" evidence="1">
    <location>
        <position position="168"/>
    </location>
    <ligand>
        <name>ATP</name>
        <dbReference type="ChEBI" id="CHEBI:30616"/>
    </ligand>
</feature>
<feature type="binding site" evidence="1">
    <location>
        <position position="174"/>
    </location>
    <ligand>
        <name>ATP</name>
        <dbReference type="ChEBI" id="CHEBI:30616"/>
    </ligand>
</feature>
<feature type="binding site" evidence="1">
    <location>
        <position position="177"/>
    </location>
    <ligand>
        <name>ATP</name>
        <dbReference type="ChEBI" id="CHEBI:30616"/>
    </ligand>
</feature>
<proteinExistence type="inferred from homology"/>